<evidence type="ECO:0000269" key="1">
    <source>
    </source>
</evidence>
<evidence type="ECO:0000303" key="2">
    <source>
    </source>
</evidence>
<evidence type="ECO:0000305" key="3"/>
<evidence type="ECO:0000305" key="4">
    <source>
    </source>
</evidence>
<evidence type="ECO:0007744" key="5">
    <source>
        <dbReference type="PDB" id="4UAR"/>
    </source>
</evidence>
<evidence type="ECO:0007744" key="6">
    <source>
        <dbReference type="PDB" id="4UAS"/>
    </source>
</evidence>
<evidence type="ECO:0007744" key="7">
    <source>
        <dbReference type="PDB" id="4UAT"/>
    </source>
</evidence>
<evidence type="ECO:0007744" key="8">
    <source>
        <dbReference type="PDB" id="4UAU"/>
    </source>
</evidence>
<evidence type="ECO:0007829" key="9">
    <source>
        <dbReference type="PDB" id="4UAS"/>
    </source>
</evidence>
<accession>P95649</accession>
<keyword id="KW-0002">3D-structure</keyword>
<keyword id="KW-0378">Hydrolase</keyword>
<keyword id="KW-0460">Magnesium</keyword>
<keyword id="KW-0479">Metal-binding</keyword>
<proteinExistence type="evidence at protein level"/>
<comment type="function">
    <text evidence="1">Highly selective xylulose-1,5-bisphosphate (XuBP) phosphatase. Also shows activity towards ribulose-1,5-bisphosphate (RuBP) and fructose-1,6-bisphosphate (FBP), but not towards fructose-6-phosphate (F6P) or ribulose-5-phosphate (Ru5P) (PubMed:27246049). Degrades xylulose-1,5-bisphosphate, a potent inhibitor of rubisco produced by the rubisco itself (PubMed:27246049).</text>
</comment>
<comment type="catalytic activity">
    <reaction evidence="1">
        <text>D-xylulose 1,5-bisphosphate + H2O = D-xylulose 5-phosphate + phosphate</text>
        <dbReference type="Rhea" id="RHEA:54548"/>
        <dbReference type="ChEBI" id="CHEBI:15377"/>
        <dbReference type="ChEBI" id="CHEBI:43474"/>
        <dbReference type="ChEBI" id="CHEBI:57737"/>
        <dbReference type="ChEBI" id="CHEBI:138268"/>
    </reaction>
</comment>
<comment type="cofactor">
    <cofactor evidence="1">
        <name>Mg(2+)</name>
        <dbReference type="ChEBI" id="CHEBI:18420"/>
    </cofactor>
</comment>
<comment type="biophysicochemical properties">
    <kinetics>
        <KM evidence="1">0.026 mM for xylulose-1,5-bisphosphate</KM>
        <KM evidence="1">2.9 mM for ribulose-1,5-bisphosphate</KM>
        <KM evidence="1">5 mM for fructose-1,6-bisphosphate</KM>
        <text evidence="1">kcat is 2.4 sec(-1) with xylulose-1,5-bisphosphate as substrate. kcat is 0.042 sec(-1) with ribulose-1,5-bisphosphate as substrate.</text>
    </kinetics>
</comment>
<comment type="similarity">
    <text evidence="3">Belongs to the HAD-like hydrolase superfamily. CbbY/CbbZ/Gph/YieH family.</text>
</comment>
<reference key="1">
    <citation type="journal article" date="1997" name="J. Bacteriol.">
        <title>Analysis of the cbbXYZ operon in Rhodobacter sphaeroides.</title>
        <authorList>
            <person name="Gibson J.L."/>
            <person name="Tabita F.R."/>
        </authorList>
    </citation>
    <scope>NUCLEOTIDE SEQUENCE [GENOMIC DNA]</scope>
    <source>
        <strain>HR</strain>
    </source>
</reference>
<reference evidence="5 6 7 8" key="2">
    <citation type="journal article" date="2015" name="Nat. Plants">
        <title>Degradation of potent Rubisco inhibitor by selective sugar phosphatase.</title>
        <authorList>
            <person name="Bracher A."/>
            <person name="Sharma A."/>
            <person name="Starling-Windhof A."/>
            <person name="Hartl F.U."/>
            <person name="Hayer-Hartl M."/>
        </authorList>
    </citation>
    <scope>X-RAY CRYSTALLOGRAPHY (1.20 ANGSTROMS) IN COMPLEX WITH MAGNESIUM AND SUBSTRATE</scope>
    <scope>CATALYTIC ACTIVITY</scope>
    <scope>FUNCTION</scope>
    <scope>BIOPHYSICOCHEMICAL PROPERTIES</scope>
    <scope>MUTAGENESIS OF ASP-10; GLU-17; HIS-20; TYR-42; ARG-54 AND LYS-78</scope>
</reference>
<gene>
    <name evidence="2" type="primary">cbbY</name>
</gene>
<sequence length="230" mass="25119">MIEAILFDVDGTLAETEELHRRAFNETFAALGVDWFWDREEYRELLTTTGGKERIARFLRHQKGDPAPLPIADIHRAKTERFVALMAEGEIALRPGIADLIAEAKRAGIRLAVATTTSLPNVEALCRACFGHPAREIFDVIAAGDMVAEKKPSPDIYRLALRELDVPPERAVALEDSLNGLRAAKGAGLRCIVSPGFYTRHEEFAGADRLLDSFAELGGLAGLDLTAPVA</sequence>
<organism>
    <name type="scientific">Cereibacter sphaeroides</name>
    <name type="common">Rhodobacter sphaeroides</name>
    <dbReference type="NCBI Taxonomy" id="1063"/>
    <lineage>
        <taxon>Bacteria</taxon>
        <taxon>Pseudomonadati</taxon>
        <taxon>Pseudomonadota</taxon>
        <taxon>Alphaproteobacteria</taxon>
        <taxon>Rhodobacterales</taxon>
        <taxon>Paracoccaceae</taxon>
        <taxon>Cereibacter</taxon>
    </lineage>
</organism>
<protein>
    <recommendedName>
        <fullName evidence="2">Protein CbbY</fullName>
        <shortName evidence="2">RuCbby</shortName>
        <ecNumber evidence="1">3.1.3.-</ecNumber>
    </recommendedName>
</protein>
<dbReference type="EC" id="3.1.3.-" evidence="1"/>
<dbReference type="EMBL" id="U67781">
    <property type="protein sequence ID" value="AAC44828.1"/>
    <property type="molecule type" value="Genomic_DNA"/>
</dbReference>
<dbReference type="RefSeq" id="WP_002721822.1">
    <property type="nucleotide sequence ID" value="NZ_WSNV01000001.1"/>
</dbReference>
<dbReference type="PDB" id="4UAR">
    <property type="method" value="X-ray"/>
    <property type="resolution" value="1.90 A"/>
    <property type="chains" value="A=1-230"/>
</dbReference>
<dbReference type="PDB" id="4UAS">
    <property type="method" value="X-ray"/>
    <property type="resolution" value="1.20 A"/>
    <property type="chains" value="A/B=1-230"/>
</dbReference>
<dbReference type="PDB" id="4UAT">
    <property type="method" value="X-ray"/>
    <property type="resolution" value="1.30 A"/>
    <property type="chains" value="A/B=1-230"/>
</dbReference>
<dbReference type="PDB" id="4UAU">
    <property type="method" value="X-ray"/>
    <property type="resolution" value="1.45 A"/>
    <property type="chains" value="A/B=1-230"/>
</dbReference>
<dbReference type="PDBsum" id="4UAR"/>
<dbReference type="PDBsum" id="4UAS"/>
<dbReference type="PDBsum" id="4UAT"/>
<dbReference type="PDBsum" id="4UAU"/>
<dbReference type="SMR" id="P95649"/>
<dbReference type="OMA" id="RFDLTFC"/>
<dbReference type="EvolutionaryTrace" id="P95649"/>
<dbReference type="GO" id="GO:0016787">
    <property type="term" value="F:hydrolase activity"/>
    <property type="evidence" value="ECO:0007669"/>
    <property type="project" value="UniProtKB-KW"/>
</dbReference>
<dbReference type="GO" id="GO:0000287">
    <property type="term" value="F:magnesium ion binding"/>
    <property type="evidence" value="ECO:0000314"/>
    <property type="project" value="UniProtKB"/>
</dbReference>
<dbReference type="GO" id="GO:0005998">
    <property type="term" value="P:xylulose catabolic process"/>
    <property type="evidence" value="ECO:0000314"/>
    <property type="project" value="UniProtKB"/>
</dbReference>
<dbReference type="CDD" id="cd07528">
    <property type="entry name" value="HAD_CbbY-like"/>
    <property type="match status" value="1"/>
</dbReference>
<dbReference type="FunFam" id="3.40.50.1000:FF:000036">
    <property type="entry name" value="HAD family hydrolase"/>
    <property type="match status" value="1"/>
</dbReference>
<dbReference type="Gene3D" id="3.40.50.1000">
    <property type="entry name" value="HAD superfamily/HAD-like"/>
    <property type="match status" value="1"/>
</dbReference>
<dbReference type="Gene3D" id="1.10.150.240">
    <property type="entry name" value="Putative phosphatase, domain 2"/>
    <property type="match status" value="1"/>
</dbReference>
<dbReference type="InterPro" id="IPR044999">
    <property type="entry name" value="CbbY-like"/>
</dbReference>
<dbReference type="InterPro" id="IPR036412">
    <property type="entry name" value="HAD-like_sf"/>
</dbReference>
<dbReference type="InterPro" id="IPR006439">
    <property type="entry name" value="HAD-SF_hydro_IA"/>
</dbReference>
<dbReference type="InterPro" id="IPR023214">
    <property type="entry name" value="HAD_sf"/>
</dbReference>
<dbReference type="InterPro" id="IPR023198">
    <property type="entry name" value="PGP-like_dom2"/>
</dbReference>
<dbReference type="NCBIfam" id="TIGR01509">
    <property type="entry name" value="HAD-SF-IA-v3"/>
    <property type="match status" value="1"/>
</dbReference>
<dbReference type="PANTHER" id="PTHR42896:SF2">
    <property type="entry name" value="CBBY-LIKE PROTEIN"/>
    <property type="match status" value="1"/>
</dbReference>
<dbReference type="PANTHER" id="PTHR42896">
    <property type="entry name" value="XYLULOSE-1,5-BISPHOSPHATE (XUBP) PHOSPHATASE"/>
    <property type="match status" value="1"/>
</dbReference>
<dbReference type="Pfam" id="PF00702">
    <property type="entry name" value="Hydrolase"/>
    <property type="match status" value="1"/>
</dbReference>
<dbReference type="PRINTS" id="PR00413">
    <property type="entry name" value="HADHALOGNASE"/>
</dbReference>
<dbReference type="SFLD" id="SFLDG01129">
    <property type="entry name" value="C1.5:_HAD__Beta-PGM__Phosphata"/>
    <property type="match status" value="1"/>
</dbReference>
<dbReference type="SFLD" id="SFLDF00035">
    <property type="entry name" value="phosphoglycolate_phosphatase"/>
    <property type="match status" value="1"/>
</dbReference>
<dbReference type="SUPFAM" id="SSF56784">
    <property type="entry name" value="HAD-like"/>
    <property type="match status" value="1"/>
</dbReference>
<name>CBBY_CERSP</name>
<feature type="chain" id="PRO_0000108057" description="Protein CbbY">
    <location>
        <begin position="1"/>
        <end position="230"/>
    </location>
</feature>
<feature type="active site" description="Nucleophile" evidence="4">
    <location>
        <position position="8"/>
    </location>
</feature>
<feature type="active site" description="Proton donor" evidence="4">
    <location>
        <position position="10"/>
    </location>
</feature>
<feature type="binding site" evidence="6">
    <location>
        <position position="8"/>
    </location>
    <ligand>
        <name>Mg(2+)</name>
        <dbReference type="ChEBI" id="CHEBI:18420"/>
    </ligand>
</feature>
<feature type="binding site" evidence="7 8">
    <location>
        <position position="8"/>
    </location>
    <ligand>
        <name>substrate</name>
    </ligand>
</feature>
<feature type="binding site" evidence="6">
    <location>
        <position position="10"/>
    </location>
    <ligand>
        <name>Mg(2+)</name>
        <dbReference type="ChEBI" id="CHEBI:18420"/>
    </ligand>
</feature>
<feature type="binding site" evidence="7 8">
    <location>
        <position position="17"/>
    </location>
    <ligand>
        <name>substrate</name>
    </ligand>
</feature>
<feature type="binding site" evidence="7 8">
    <location>
        <begin position="50"/>
        <end position="54"/>
    </location>
    <ligand>
        <name>substrate</name>
    </ligand>
</feature>
<feature type="binding site" evidence="7 8">
    <location>
        <begin position="75"/>
        <end position="78"/>
    </location>
    <ligand>
        <name>substrate</name>
    </ligand>
</feature>
<feature type="binding site" evidence="7 8">
    <location>
        <begin position="115"/>
        <end position="121"/>
    </location>
    <ligand>
        <name>substrate</name>
    </ligand>
</feature>
<feature type="binding site" evidence="6">
    <location>
        <position position="176"/>
    </location>
    <ligand>
        <name>Mg(2+)</name>
        <dbReference type="ChEBI" id="CHEBI:18420"/>
    </ligand>
</feature>
<feature type="mutagenesis site" description="Loss of catalytic activity." evidence="1">
    <original>D</original>
    <variation>N</variation>
    <location>
        <position position="10"/>
    </location>
</feature>
<feature type="mutagenesis site" description="40% to 80% decreased catalytic activity with xylulose-1,5-bisphosphate, but no effect on activity with ribulose-1,5-bisphosphate." evidence="1">
    <original>E</original>
    <variation>A</variation>
    <location>
        <position position="17"/>
    </location>
</feature>
<feature type="mutagenesis site" description="40% to 80% decreased catalytic activity with xylulose-1,5-bisphosphate, but no effect on activity with ribulose-1,5-bisphosphate." evidence="1">
    <original>H</original>
    <variation>A</variation>
    <location>
        <position position="20"/>
    </location>
</feature>
<feature type="mutagenesis site" description="40% to 80% decreased catalytic activity with xylulose-1,5-bisphosphate, but no effect on activity with ribulose-1,5-bisphosphate." evidence="1">
    <original>Y</original>
    <variation>A</variation>
    <location>
        <position position="42"/>
    </location>
</feature>
<feature type="mutagenesis site" description="97% decreased catalytic activity with xylulose-1,5-bisphosphate, but no effect on activity with ribulose-1,5-bisphosphate." evidence="1">
    <original>R</original>
    <variation>A</variation>
    <location>
        <position position="54"/>
    </location>
</feature>
<feature type="mutagenesis site" description="40% to 80% decreased catalytic activity with xylulose-1,5-bisphosphate, but no effect on activity with ribulose-1,5-bisphosphate." evidence="1">
    <original>K</original>
    <variation>A</variation>
    <location>
        <position position="78"/>
    </location>
</feature>
<feature type="strand" evidence="9">
    <location>
        <begin position="4"/>
        <end position="7"/>
    </location>
</feature>
<feature type="turn" evidence="9">
    <location>
        <begin position="10"/>
        <end position="12"/>
    </location>
</feature>
<feature type="helix" evidence="9">
    <location>
        <begin position="17"/>
        <end position="31"/>
    </location>
</feature>
<feature type="helix" evidence="9">
    <location>
        <begin position="39"/>
        <end position="45"/>
    </location>
</feature>
<feature type="helix" evidence="9">
    <location>
        <begin position="51"/>
        <end position="61"/>
    </location>
</feature>
<feature type="helix" evidence="9">
    <location>
        <begin position="71"/>
        <end position="87"/>
    </location>
</feature>
<feature type="helix" evidence="9">
    <location>
        <begin position="97"/>
        <end position="107"/>
    </location>
</feature>
<feature type="strand" evidence="9">
    <location>
        <begin position="110"/>
        <end position="114"/>
    </location>
</feature>
<feature type="helix" evidence="9">
    <location>
        <begin position="119"/>
        <end position="129"/>
    </location>
</feature>
<feature type="helix" evidence="9">
    <location>
        <begin position="134"/>
        <end position="136"/>
    </location>
</feature>
<feature type="strand" evidence="9">
    <location>
        <begin position="139"/>
        <end position="142"/>
    </location>
</feature>
<feature type="helix" evidence="9">
    <location>
        <begin position="144"/>
        <end position="146"/>
    </location>
</feature>
<feature type="strand" evidence="9">
    <location>
        <begin position="147"/>
        <end position="149"/>
    </location>
</feature>
<feature type="helix" evidence="9">
    <location>
        <begin position="155"/>
        <end position="164"/>
    </location>
</feature>
<feature type="helix" evidence="9">
    <location>
        <begin position="168"/>
        <end position="170"/>
    </location>
</feature>
<feature type="strand" evidence="9">
    <location>
        <begin position="171"/>
        <end position="177"/>
    </location>
</feature>
<feature type="helix" evidence="9">
    <location>
        <begin position="178"/>
        <end position="186"/>
    </location>
</feature>
<feature type="strand" evidence="9">
    <location>
        <begin position="190"/>
        <end position="193"/>
    </location>
</feature>
<feature type="turn" evidence="9">
    <location>
        <begin position="197"/>
        <end position="201"/>
    </location>
</feature>
<feature type="strand" evidence="9">
    <location>
        <begin position="208"/>
        <end position="210"/>
    </location>
</feature>
<feature type="helix" evidence="9">
    <location>
        <begin position="214"/>
        <end position="216"/>
    </location>
</feature>
<feature type="helix" evidence="9">
    <location>
        <begin position="220"/>
        <end position="223"/>
    </location>
</feature>